<name>HRPZ_PSEAP</name>
<gene>
    <name type="primary">hrpZ</name>
</gene>
<sequence length="342" mass="34669">MQSLSLNSSSLQTPAMALVLVRPETETTGASTSSRALQEVVVKLAEELMRNGQLDDSSPLGKLLAKSMAADGKAGGGIEDVIAALDKLIHEKLGDNFGASADNASGTGQQDLMTQVLSGLAKSMLDDLLTKQDGGSSFSEDDMPMLSKIAQFMDDNPAQFPKPDSGSWVNELKEDNFLDGDKTAAFRSALDIIGQQLGNQQSDAGGLAGTGGGLGTPSSFSNNSSVTGDPLIGANTGPGDSGNSSSEAGQLIGEFIDRGLQSVLAGGGLGTPVNTPQTGTAANGGQSAQDLDQLLGGLLLKGLEATLKDAGQTATDVQSSAAQIATLLVSTLLQGTRNQAAA</sequence>
<reference key="1">
    <citation type="journal article" date="2001" name="Antonie Van Leeuwenhoek">
        <title>Identification and expression of the Pseudomonas syringae pv. aptata hrpZ(Psa) gene which encodes an harpin elicitor.</title>
        <authorList>
            <person name="Musa A.R."/>
            <person name="Minard P."/>
            <person name="Mazzucchi U."/>
        </authorList>
    </citation>
    <scope>NUCLEOTIDE SEQUENCE [GENOMIC DNA]</scope>
    <scope>PROTEIN SEQUENCE OF 1-10</scope>
    <source>
        <strain>LMG 5532 / NCPPB 2664</strain>
    </source>
</reference>
<organism>
    <name type="scientific">Pseudomonas syringae pv. aptata</name>
    <dbReference type="NCBI Taxonomy" id="83167"/>
    <lineage>
        <taxon>Bacteria</taxon>
        <taxon>Pseudomonadati</taxon>
        <taxon>Pseudomonadota</taxon>
        <taxon>Gammaproteobacteria</taxon>
        <taxon>Pseudomonadales</taxon>
        <taxon>Pseudomonadaceae</taxon>
        <taxon>Pseudomonas</taxon>
        <taxon>Pseudomonas syringae</taxon>
    </lineage>
</organism>
<feature type="chain" id="PRO_0000220299" description="Harpin HrpZ">
    <location>
        <begin position="1"/>
        <end position="342"/>
    </location>
</feature>
<feature type="repeat" description="1-1">
    <location>
        <begin position="211"/>
        <end position="217"/>
    </location>
</feature>
<feature type="repeat" description="1-2">
    <location>
        <begin position="266"/>
        <end position="272"/>
    </location>
</feature>
<feature type="repeat" description="2-1">
    <location>
        <begin position="277"/>
        <end position="280"/>
    </location>
</feature>
<feature type="repeat" description="2-2">
    <location>
        <begin position="312"/>
        <end position="315"/>
    </location>
</feature>
<feature type="region of interest" description="Disordered" evidence="2">
    <location>
        <begin position="200"/>
        <end position="248"/>
    </location>
</feature>
<feature type="region of interest" description="2 X 7 AA repeats of G-G-G-L-G-T-P">
    <location>
        <begin position="211"/>
        <end position="272"/>
    </location>
</feature>
<feature type="region of interest" description="Disordered" evidence="2">
    <location>
        <begin position="267"/>
        <end position="287"/>
    </location>
</feature>
<feature type="region of interest" description="2 X 4 AA repeats of Q-T-[GA]-T">
    <location>
        <begin position="277"/>
        <end position="315"/>
    </location>
</feature>
<feature type="compositionally biased region" description="Gly residues" evidence="2">
    <location>
        <begin position="206"/>
        <end position="215"/>
    </location>
</feature>
<feature type="compositionally biased region" description="Polar residues" evidence="2">
    <location>
        <begin position="217"/>
        <end position="227"/>
    </location>
</feature>
<feature type="compositionally biased region" description="Polar residues" evidence="2">
    <location>
        <begin position="272"/>
        <end position="283"/>
    </location>
</feature>
<accession>O87653</accession>
<protein>
    <recommendedName>
        <fullName>Harpin HrpZ</fullName>
    </recommendedName>
    <alternativeName>
        <fullName>Harpin-Psa</fullName>
    </alternativeName>
    <alternativeName>
        <fullName>HrpZ-Psa protein</fullName>
    </alternativeName>
</protein>
<comment type="function">
    <text evidence="1">Harpins are proteins able to elicit hypersensitive response (HR) in non-host plants and are required for pathogenicity in host plants. HrpZ forms ion-conducting pores permeable for cations. Such pore-forming activity may allow nutrient release and/or delivery of virulence factors during bacterial colonization of host plants (By similarity).</text>
</comment>
<comment type="subunit">
    <text evidence="1">Homomultimeric.</text>
</comment>
<comment type="subcellular location">
    <subcellularLocation>
        <location>Secreted</location>
    </subcellularLocation>
    <subcellularLocation>
        <location evidence="3">Host cell membrane</location>
    </subcellularLocation>
    <text evidence="1">Secreted via type III secretion system (T3SS), delivered into the host intercellular space. HrpZ travels through the hrp pilus and it is secreted only from the pilus tip (By similarity).</text>
</comment>
<comment type="domain">
    <text>The glycine-rich region is characteristic of harpins.</text>
</comment>
<comment type="similarity">
    <text evidence="3">Belongs to the harpin HrpZ family.</text>
</comment>
<proteinExistence type="evidence at protein level"/>
<dbReference type="EMBL" id="AF092879">
    <property type="protein sequence ID" value="AAC63363.1"/>
    <property type="molecule type" value="Genomic_DNA"/>
</dbReference>
<dbReference type="GO" id="GO:0005576">
    <property type="term" value="C:extracellular region"/>
    <property type="evidence" value="ECO:0007669"/>
    <property type="project" value="UniProtKB-SubCell"/>
</dbReference>
<dbReference type="GO" id="GO:0020002">
    <property type="term" value="C:host cell plasma membrane"/>
    <property type="evidence" value="ECO:0007669"/>
    <property type="project" value="UniProtKB-SubCell"/>
</dbReference>
<dbReference type="GO" id="GO:0016020">
    <property type="term" value="C:membrane"/>
    <property type="evidence" value="ECO:0007669"/>
    <property type="project" value="UniProtKB-KW"/>
</dbReference>
<dbReference type="GO" id="GO:0034220">
    <property type="term" value="P:monoatomic ion transmembrane transport"/>
    <property type="evidence" value="ECO:0007669"/>
    <property type="project" value="UniProtKB-KW"/>
</dbReference>
<dbReference type="GO" id="GO:0052040">
    <property type="term" value="P:symbiont-mediated perturbation of host programmed cell death"/>
    <property type="evidence" value="ECO:0007669"/>
    <property type="project" value="UniProtKB-KW"/>
</dbReference>
<dbReference type="InterPro" id="IPR006961">
    <property type="entry name" value="HrpN/Z"/>
</dbReference>
<dbReference type="InterPro" id="IPR054634">
    <property type="entry name" value="T3SS_HrpZ"/>
</dbReference>
<dbReference type="NCBIfam" id="NF045569">
    <property type="entry name" value="T3SSHrpZ"/>
    <property type="match status" value="1"/>
</dbReference>
<dbReference type="Pfam" id="PF04877">
    <property type="entry name" value="Harpin"/>
    <property type="match status" value="1"/>
</dbReference>
<keyword id="KW-0903">Direct protein sequencing</keyword>
<keyword id="KW-1032">Host cell membrane</keyword>
<keyword id="KW-1043">Host membrane</keyword>
<keyword id="KW-0928">Hypersensitive response elicitation</keyword>
<keyword id="KW-0407">Ion channel</keyword>
<keyword id="KW-0406">Ion transport</keyword>
<keyword id="KW-0472">Membrane</keyword>
<keyword id="KW-0677">Repeat</keyword>
<keyword id="KW-0964">Secreted</keyword>
<keyword id="KW-0813">Transport</keyword>
<keyword id="KW-0843">Virulence</keyword>
<evidence type="ECO:0000250" key="1"/>
<evidence type="ECO:0000256" key="2">
    <source>
        <dbReference type="SAM" id="MobiDB-lite"/>
    </source>
</evidence>
<evidence type="ECO:0000305" key="3"/>